<organism>
    <name type="scientific">Nocardia farcinica (strain IFM 10152)</name>
    <dbReference type="NCBI Taxonomy" id="247156"/>
    <lineage>
        <taxon>Bacteria</taxon>
        <taxon>Bacillati</taxon>
        <taxon>Actinomycetota</taxon>
        <taxon>Actinomycetes</taxon>
        <taxon>Mycobacteriales</taxon>
        <taxon>Nocardiaceae</taxon>
        <taxon>Nocardia</taxon>
    </lineage>
</organism>
<proteinExistence type="inferred from homology"/>
<reference key="1">
    <citation type="journal article" date="2004" name="Proc. Natl. Acad. Sci. U.S.A.">
        <title>The complete genomic sequence of Nocardia farcinica IFM 10152.</title>
        <authorList>
            <person name="Ishikawa J."/>
            <person name="Yamashita A."/>
            <person name="Mikami Y."/>
            <person name="Hoshino Y."/>
            <person name="Kurita H."/>
            <person name="Hotta K."/>
            <person name="Shiba T."/>
            <person name="Hattori M."/>
        </authorList>
    </citation>
    <scope>NUCLEOTIDE SEQUENCE [LARGE SCALE GENOMIC DNA]</scope>
    <source>
        <strain>IFM 10152</strain>
    </source>
</reference>
<protein>
    <recommendedName>
        <fullName evidence="1">Small ribosomal subunit protein uS2</fullName>
    </recommendedName>
    <alternativeName>
        <fullName evidence="3">30S ribosomal protein S2</fullName>
    </alternativeName>
</protein>
<evidence type="ECO:0000255" key="1">
    <source>
        <dbReference type="HAMAP-Rule" id="MF_00291"/>
    </source>
</evidence>
<evidence type="ECO:0000256" key="2">
    <source>
        <dbReference type="SAM" id="MobiDB-lite"/>
    </source>
</evidence>
<evidence type="ECO:0000305" key="3"/>
<comment type="similarity">
    <text evidence="1">Belongs to the universal ribosomal protein uS2 family.</text>
</comment>
<keyword id="KW-1185">Reference proteome</keyword>
<keyword id="KW-0687">Ribonucleoprotein</keyword>
<keyword id="KW-0689">Ribosomal protein</keyword>
<accession>Q5YS61</accession>
<dbReference type="EMBL" id="AP006618">
    <property type="protein sequence ID" value="BAD58980.1"/>
    <property type="molecule type" value="Genomic_DNA"/>
</dbReference>
<dbReference type="RefSeq" id="WP_011210665.1">
    <property type="nucleotide sequence ID" value="NC_006361.1"/>
</dbReference>
<dbReference type="SMR" id="Q5YS61"/>
<dbReference type="STRING" id="247156.NFA_41310"/>
<dbReference type="GeneID" id="61134771"/>
<dbReference type="KEGG" id="nfa:NFA_41310"/>
<dbReference type="eggNOG" id="COG0052">
    <property type="taxonomic scope" value="Bacteria"/>
</dbReference>
<dbReference type="HOGENOM" id="CLU_040318_2_3_11"/>
<dbReference type="OrthoDB" id="9808036at2"/>
<dbReference type="Proteomes" id="UP000006820">
    <property type="component" value="Chromosome"/>
</dbReference>
<dbReference type="GO" id="GO:0022627">
    <property type="term" value="C:cytosolic small ribosomal subunit"/>
    <property type="evidence" value="ECO:0007669"/>
    <property type="project" value="TreeGrafter"/>
</dbReference>
<dbReference type="GO" id="GO:0003735">
    <property type="term" value="F:structural constituent of ribosome"/>
    <property type="evidence" value="ECO:0007669"/>
    <property type="project" value="InterPro"/>
</dbReference>
<dbReference type="GO" id="GO:0006412">
    <property type="term" value="P:translation"/>
    <property type="evidence" value="ECO:0007669"/>
    <property type="project" value="UniProtKB-UniRule"/>
</dbReference>
<dbReference type="CDD" id="cd01425">
    <property type="entry name" value="RPS2"/>
    <property type="match status" value="1"/>
</dbReference>
<dbReference type="FunFam" id="1.10.287.610:FF:000001">
    <property type="entry name" value="30S ribosomal protein S2"/>
    <property type="match status" value="1"/>
</dbReference>
<dbReference type="Gene3D" id="3.40.50.10490">
    <property type="entry name" value="Glucose-6-phosphate isomerase like protein, domain 1"/>
    <property type="match status" value="1"/>
</dbReference>
<dbReference type="Gene3D" id="1.10.287.610">
    <property type="entry name" value="Helix hairpin bin"/>
    <property type="match status" value="1"/>
</dbReference>
<dbReference type="HAMAP" id="MF_00291_B">
    <property type="entry name" value="Ribosomal_uS2_B"/>
    <property type="match status" value="1"/>
</dbReference>
<dbReference type="InterPro" id="IPR001865">
    <property type="entry name" value="Ribosomal_uS2"/>
</dbReference>
<dbReference type="InterPro" id="IPR005706">
    <property type="entry name" value="Ribosomal_uS2_bac/mit/plastid"/>
</dbReference>
<dbReference type="InterPro" id="IPR018130">
    <property type="entry name" value="Ribosomal_uS2_CS"/>
</dbReference>
<dbReference type="InterPro" id="IPR023591">
    <property type="entry name" value="Ribosomal_uS2_flav_dom_sf"/>
</dbReference>
<dbReference type="NCBIfam" id="TIGR01011">
    <property type="entry name" value="rpsB_bact"/>
    <property type="match status" value="1"/>
</dbReference>
<dbReference type="PANTHER" id="PTHR12534">
    <property type="entry name" value="30S RIBOSOMAL PROTEIN S2 PROKARYOTIC AND ORGANELLAR"/>
    <property type="match status" value="1"/>
</dbReference>
<dbReference type="PANTHER" id="PTHR12534:SF0">
    <property type="entry name" value="SMALL RIBOSOMAL SUBUNIT PROTEIN US2M"/>
    <property type="match status" value="1"/>
</dbReference>
<dbReference type="Pfam" id="PF00318">
    <property type="entry name" value="Ribosomal_S2"/>
    <property type="match status" value="1"/>
</dbReference>
<dbReference type="PRINTS" id="PR00395">
    <property type="entry name" value="RIBOSOMALS2"/>
</dbReference>
<dbReference type="SUPFAM" id="SSF52313">
    <property type="entry name" value="Ribosomal protein S2"/>
    <property type="match status" value="1"/>
</dbReference>
<dbReference type="PROSITE" id="PS00962">
    <property type="entry name" value="RIBOSOMAL_S2_1"/>
    <property type="match status" value="1"/>
</dbReference>
<name>RS2_NOCFA</name>
<sequence>MAVVTMKQLLDSGAHFGHQTRRWNPKMKRFIFTDRNGIYIIDLQQTLTYIDKAYEFVKETVAHGGTVLFVGTKKQAQESIAAEATRVGMPYVNQRWLGGMLTNFSTVHKRLQRLKELEAMEQTGGFEGRTKKEILMLTREMNKLERTLGGIRDMQKVPSAIWVVDTNKEHIAVGEARKLNIPVIAILDTNCDPDLVDYPIPGNDDAIRSAALLTKVVASAVAEGVQARAGLASGDAKPEAGAGEPLAEWEQELLAQANPNAEGSAEAAPAAATEEAPAAQTPADF</sequence>
<feature type="chain" id="PRO_0000134207" description="Small ribosomal subunit protein uS2">
    <location>
        <begin position="1"/>
        <end position="285"/>
    </location>
</feature>
<feature type="region of interest" description="Disordered" evidence="2">
    <location>
        <begin position="229"/>
        <end position="285"/>
    </location>
</feature>
<feature type="compositionally biased region" description="Low complexity" evidence="2">
    <location>
        <begin position="257"/>
        <end position="285"/>
    </location>
</feature>
<gene>
    <name evidence="1" type="primary">rpsB</name>
    <name type="ordered locus">NFA_41310</name>
</gene>